<gene>
    <name evidence="1" type="primary">rpmI</name>
    <name type="ordered locus">CbuK_1189</name>
</gene>
<keyword id="KW-0687">Ribonucleoprotein</keyword>
<keyword id="KW-0689">Ribosomal protein</keyword>
<organism>
    <name type="scientific">Coxiella burnetii (strain CbuK_Q154)</name>
    <name type="common">Coxiella burnetii (strain Q154)</name>
    <dbReference type="NCBI Taxonomy" id="434924"/>
    <lineage>
        <taxon>Bacteria</taxon>
        <taxon>Pseudomonadati</taxon>
        <taxon>Pseudomonadota</taxon>
        <taxon>Gammaproteobacteria</taxon>
        <taxon>Legionellales</taxon>
        <taxon>Coxiellaceae</taxon>
        <taxon>Coxiella</taxon>
    </lineage>
</organism>
<protein>
    <recommendedName>
        <fullName evidence="1">Large ribosomal subunit protein bL35</fullName>
    </recommendedName>
    <alternativeName>
        <fullName evidence="2">50S ribosomal protein L35</fullName>
    </alternativeName>
</protein>
<proteinExistence type="inferred from homology"/>
<feature type="chain" id="PRO_1000127331" description="Large ribosomal subunit protein bL35">
    <location>
        <begin position="1"/>
        <end position="64"/>
    </location>
</feature>
<name>RL35_COXB1</name>
<reference key="1">
    <citation type="journal article" date="2009" name="Infect. Immun.">
        <title>Comparative genomics reveal extensive transposon-mediated genomic plasticity and diversity among potential effector proteins within the genus Coxiella.</title>
        <authorList>
            <person name="Beare P.A."/>
            <person name="Unsworth N."/>
            <person name="Andoh M."/>
            <person name="Voth D.E."/>
            <person name="Omsland A."/>
            <person name="Gilk S.D."/>
            <person name="Williams K.P."/>
            <person name="Sobral B.W."/>
            <person name="Kupko J.J. III"/>
            <person name="Porcella S.F."/>
            <person name="Samuel J.E."/>
            <person name="Heinzen R.A."/>
        </authorList>
    </citation>
    <scope>NUCLEOTIDE SEQUENCE [LARGE SCALE GENOMIC DNA]</scope>
    <source>
        <strain>CbuK_Q154</strain>
    </source>
</reference>
<comment type="similarity">
    <text evidence="1">Belongs to the bacterial ribosomal protein bL35 family.</text>
</comment>
<sequence>MPKLKTNRGAVKRFKVTGSGKIKRAASNHNHILTKKSQKRKRRLRKIHEVAPSDMRAVSEMLRD</sequence>
<accession>B6J7Y0</accession>
<dbReference type="EMBL" id="CP001020">
    <property type="protein sequence ID" value="ACJ20379.1"/>
    <property type="molecule type" value="Genomic_DNA"/>
</dbReference>
<dbReference type="RefSeq" id="WP_005770936.1">
    <property type="nucleotide sequence ID" value="NC_011528.1"/>
</dbReference>
<dbReference type="SMR" id="B6J7Y0"/>
<dbReference type="KEGG" id="cbc:CbuK_1189"/>
<dbReference type="HOGENOM" id="CLU_169643_1_1_6"/>
<dbReference type="GO" id="GO:0022625">
    <property type="term" value="C:cytosolic large ribosomal subunit"/>
    <property type="evidence" value="ECO:0007669"/>
    <property type="project" value="TreeGrafter"/>
</dbReference>
<dbReference type="GO" id="GO:0003735">
    <property type="term" value="F:structural constituent of ribosome"/>
    <property type="evidence" value="ECO:0007669"/>
    <property type="project" value="InterPro"/>
</dbReference>
<dbReference type="GO" id="GO:0006412">
    <property type="term" value="P:translation"/>
    <property type="evidence" value="ECO:0007669"/>
    <property type="project" value="UniProtKB-UniRule"/>
</dbReference>
<dbReference type="FunFam" id="4.10.410.60:FF:000001">
    <property type="entry name" value="50S ribosomal protein L35"/>
    <property type="match status" value="1"/>
</dbReference>
<dbReference type="Gene3D" id="4.10.410.60">
    <property type="match status" value="1"/>
</dbReference>
<dbReference type="HAMAP" id="MF_00514">
    <property type="entry name" value="Ribosomal_bL35"/>
    <property type="match status" value="1"/>
</dbReference>
<dbReference type="InterPro" id="IPR001706">
    <property type="entry name" value="Ribosomal_bL35"/>
</dbReference>
<dbReference type="InterPro" id="IPR021137">
    <property type="entry name" value="Ribosomal_bL35-like"/>
</dbReference>
<dbReference type="InterPro" id="IPR018265">
    <property type="entry name" value="Ribosomal_bL35_CS"/>
</dbReference>
<dbReference type="InterPro" id="IPR037229">
    <property type="entry name" value="Ribosomal_bL35_sf"/>
</dbReference>
<dbReference type="NCBIfam" id="TIGR00001">
    <property type="entry name" value="rpmI_bact"/>
    <property type="match status" value="1"/>
</dbReference>
<dbReference type="PANTHER" id="PTHR33343">
    <property type="entry name" value="54S RIBOSOMAL PROTEIN BL35M"/>
    <property type="match status" value="1"/>
</dbReference>
<dbReference type="PANTHER" id="PTHR33343:SF1">
    <property type="entry name" value="LARGE RIBOSOMAL SUBUNIT PROTEIN BL35M"/>
    <property type="match status" value="1"/>
</dbReference>
<dbReference type="Pfam" id="PF01632">
    <property type="entry name" value="Ribosomal_L35p"/>
    <property type="match status" value="1"/>
</dbReference>
<dbReference type="PRINTS" id="PR00064">
    <property type="entry name" value="RIBOSOMALL35"/>
</dbReference>
<dbReference type="SUPFAM" id="SSF143034">
    <property type="entry name" value="L35p-like"/>
    <property type="match status" value="1"/>
</dbReference>
<dbReference type="PROSITE" id="PS00936">
    <property type="entry name" value="RIBOSOMAL_L35"/>
    <property type="match status" value="1"/>
</dbReference>
<evidence type="ECO:0000255" key="1">
    <source>
        <dbReference type="HAMAP-Rule" id="MF_00514"/>
    </source>
</evidence>
<evidence type="ECO:0000305" key="2"/>